<name>RPOB_CYACA</name>
<gene>
    <name evidence="1" type="primary">rpoB</name>
</gene>
<evidence type="ECO:0000255" key="1">
    <source>
        <dbReference type="HAMAP-Rule" id="MF_01321"/>
    </source>
</evidence>
<accession>Q9TM35</accession>
<dbReference type="EC" id="2.7.7.6" evidence="1"/>
<dbReference type="EMBL" id="AF022186">
    <property type="protein sequence ID" value="AAF13014.1"/>
    <property type="molecule type" value="Genomic_DNA"/>
</dbReference>
<dbReference type="RefSeq" id="NP_045031.1">
    <property type="nucleotide sequence ID" value="NC_001840.1"/>
</dbReference>
<dbReference type="SMR" id="Q9TM35"/>
<dbReference type="GeneID" id="800292"/>
<dbReference type="GO" id="GO:0009507">
    <property type="term" value="C:chloroplast"/>
    <property type="evidence" value="ECO:0007669"/>
    <property type="project" value="UniProtKB-SubCell"/>
</dbReference>
<dbReference type="GO" id="GO:0000428">
    <property type="term" value="C:DNA-directed RNA polymerase complex"/>
    <property type="evidence" value="ECO:0007669"/>
    <property type="project" value="UniProtKB-KW"/>
</dbReference>
<dbReference type="GO" id="GO:0005739">
    <property type="term" value="C:mitochondrion"/>
    <property type="evidence" value="ECO:0007669"/>
    <property type="project" value="GOC"/>
</dbReference>
<dbReference type="GO" id="GO:0003677">
    <property type="term" value="F:DNA binding"/>
    <property type="evidence" value="ECO:0007669"/>
    <property type="project" value="UniProtKB-UniRule"/>
</dbReference>
<dbReference type="GO" id="GO:0003899">
    <property type="term" value="F:DNA-directed RNA polymerase activity"/>
    <property type="evidence" value="ECO:0007669"/>
    <property type="project" value="UniProtKB-UniRule"/>
</dbReference>
<dbReference type="GO" id="GO:0032549">
    <property type="term" value="F:ribonucleoside binding"/>
    <property type="evidence" value="ECO:0007669"/>
    <property type="project" value="InterPro"/>
</dbReference>
<dbReference type="GO" id="GO:0006351">
    <property type="term" value="P:DNA-templated transcription"/>
    <property type="evidence" value="ECO:0007669"/>
    <property type="project" value="UniProtKB-UniRule"/>
</dbReference>
<dbReference type="CDD" id="cd00653">
    <property type="entry name" value="RNA_pol_B_RPB2"/>
    <property type="match status" value="1"/>
</dbReference>
<dbReference type="Gene3D" id="2.40.50.100">
    <property type="match status" value="1"/>
</dbReference>
<dbReference type="Gene3D" id="2.40.50.150">
    <property type="match status" value="1"/>
</dbReference>
<dbReference type="Gene3D" id="3.90.1100.10">
    <property type="match status" value="1"/>
</dbReference>
<dbReference type="Gene3D" id="2.30.150.10">
    <property type="entry name" value="DNA-directed RNA polymerase, beta subunit, external 1 domain"/>
    <property type="match status" value="1"/>
</dbReference>
<dbReference type="Gene3D" id="2.40.270.10">
    <property type="entry name" value="DNA-directed RNA polymerase, subunit 2, domain 6"/>
    <property type="match status" value="1"/>
</dbReference>
<dbReference type="Gene3D" id="3.90.1800.10">
    <property type="entry name" value="RNA polymerase alpha subunit dimerisation domain"/>
    <property type="match status" value="1"/>
</dbReference>
<dbReference type="Gene3D" id="3.90.1110.10">
    <property type="entry name" value="RNA polymerase Rpb2, domain 2"/>
    <property type="match status" value="1"/>
</dbReference>
<dbReference type="HAMAP" id="MF_01321">
    <property type="entry name" value="RNApol_bact_RpoB"/>
    <property type="match status" value="1"/>
</dbReference>
<dbReference type="InterPro" id="IPR042107">
    <property type="entry name" value="DNA-dir_RNA_pol_bsu_ext_1_sf"/>
</dbReference>
<dbReference type="InterPro" id="IPR019462">
    <property type="entry name" value="DNA-dir_RNA_pol_bsu_external_1"/>
</dbReference>
<dbReference type="InterPro" id="IPR015712">
    <property type="entry name" value="DNA-dir_RNA_pol_su2"/>
</dbReference>
<dbReference type="InterPro" id="IPR007120">
    <property type="entry name" value="DNA-dir_RNAP_su2_dom"/>
</dbReference>
<dbReference type="InterPro" id="IPR037033">
    <property type="entry name" value="DNA-dir_RNAP_su2_hyb_sf"/>
</dbReference>
<dbReference type="InterPro" id="IPR010243">
    <property type="entry name" value="RNA_pol_bsu_bac"/>
</dbReference>
<dbReference type="InterPro" id="IPR007121">
    <property type="entry name" value="RNA_pol_bsu_CS"/>
</dbReference>
<dbReference type="InterPro" id="IPR007644">
    <property type="entry name" value="RNA_pol_bsu_protrusion"/>
</dbReference>
<dbReference type="InterPro" id="IPR007642">
    <property type="entry name" value="RNA_pol_Rpb2_2"/>
</dbReference>
<dbReference type="InterPro" id="IPR037034">
    <property type="entry name" value="RNA_pol_Rpb2_2_sf"/>
</dbReference>
<dbReference type="InterPro" id="IPR007645">
    <property type="entry name" value="RNA_pol_Rpb2_3"/>
</dbReference>
<dbReference type="InterPro" id="IPR007641">
    <property type="entry name" value="RNA_pol_Rpb2_7"/>
</dbReference>
<dbReference type="InterPro" id="IPR014724">
    <property type="entry name" value="RNA_pol_RPB2_OB-fold"/>
</dbReference>
<dbReference type="NCBIfam" id="NF001616">
    <property type="entry name" value="PRK00405.1"/>
    <property type="match status" value="1"/>
</dbReference>
<dbReference type="NCBIfam" id="TIGR02013">
    <property type="entry name" value="rpoB"/>
    <property type="match status" value="1"/>
</dbReference>
<dbReference type="PANTHER" id="PTHR20856">
    <property type="entry name" value="DNA-DIRECTED RNA POLYMERASE I SUBUNIT 2"/>
    <property type="match status" value="1"/>
</dbReference>
<dbReference type="Pfam" id="PF04563">
    <property type="entry name" value="RNA_pol_Rpb2_1"/>
    <property type="match status" value="1"/>
</dbReference>
<dbReference type="Pfam" id="PF04561">
    <property type="entry name" value="RNA_pol_Rpb2_2"/>
    <property type="match status" value="1"/>
</dbReference>
<dbReference type="Pfam" id="PF04565">
    <property type="entry name" value="RNA_pol_Rpb2_3"/>
    <property type="match status" value="1"/>
</dbReference>
<dbReference type="Pfam" id="PF10385">
    <property type="entry name" value="RNA_pol_Rpb2_45"/>
    <property type="match status" value="1"/>
</dbReference>
<dbReference type="Pfam" id="PF00562">
    <property type="entry name" value="RNA_pol_Rpb2_6"/>
    <property type="match status" value="1"/>
</dbReference>
<dbReference type="Pfam" id="PF04560">
    <property type="entry name" value="RNA_pol_Rpb2_7"/>
    <property type="match status" value="1"/>
</dbReference>
<dbReference type="SUPFAM" id="SSF64484">
    <property type="entry name" value="beta and beta-prime subunits of DNA dependent RNA-polymerase"/>
    <property type="match status" value="1"/>
</dbReference>
<dbReference type="PROSITE" id="PS01166">
    <property type="entry name" value="RNA_POL_BETA"/>
    <property type="match status" value="1"/>
</dbReference>
<keyword id="KW-0150">Chloroplast</keyword>
<keyword id="KW-0240">DNA-directed RNA polymerase</keyword>
<keyword id="KW-0548">Nucleotidyltransferase</keyword>
<keyword id="KW-0934">Plastid</keyword>
<keyword id="KW-0804">Transcription</keyword>
<keyword id="KW-0808">Transferase</keyword>
<protein>
    <recommendedName>
        <fullName evidence="1">DNA-directed RNA polymerase subunit beta</fullName>
        <ecNumber evidence="1">2.7.7.6</ecNumber>
    </recommendedName>
    <alternativeName>
        <fullName evidence="1">PEP</fullName>
    </alternativeName>
    <alternativeName>
        <fullName evidence="1">Plastid-encoded RNA polymerase subunit beta</fullName>
        <shortName evidence="1">RNA polymerase subunit beta</shortName>
    </alternativeName>
</protein>
<comment type="function">
    <text evidence="1">DNA-dependent RNA polymerase catalyzes the transcription of DNA into RNA using the four ribonucleoside triphosphates as substrates.</text>
</comment>
<comment type="catalytic activity">
    <reaction evidence="1">
        <text>RNA(n) + a ribonucleoside 5'-triphosphate = RNA(n+1) + diphosphate</text>
        <dbReference type="Rhea" id="RHEA:21248"/>
        <dbReference type="Rhea" id="RHEA-COMP:14527"/>
        <dbReference type="Rhea" id="RHEA-COMP:17342"/>
        <dbReference type="ChEBI" id="CHEBI:33019"/>
        <dbReference type="ChEBI" id="CHEBI:61557"/>
        <dbReference type="ChEBI" id="CHEBI:140395"/>
        <dbReference type="EC" id="2.7.7.6"/>
    </reaction>
</comment>
<comment type="subunit">
    <text evidence="1">In plastids the minimal PEP RNA polymerase catalytic core is composed of four subunits: alpha, beta, beta', and beta''. When a (nuclear-encoded) sigma factor is associated with the core the holoenzyme is formed, which can initiate transcription.</text>
</comment>
<comment type="subcellular location">
    <subcellularLocation>
        <location>Plastid</location>
        <location>Chloroplast</location>
    </subcellularLocation>
</comment>
<comment type="similarity">
    <text evidence="1">Belongs to the RNA polymerase beta chain family.</text>
</comment>
<proteinExistence type="inferred from homology"/>
<feature type="chain" id="PRO_0000048019" description="DNA-directed RNA polymerase subunit beta">
    <location>
        <begin position="1"/>
        <end position="1081"/>
    </location>
</feature>
<geneLocation type="chloroplast"/>
<organism>
    <name type="scientific">Cyanidium caldarium</name>
    <name type="common">Red alga</name>
    <dbReference type="NCBI Taxonomy" id="2771"/>
    <lineage>
        <taxon>Eukaryota</taxon>
        <taxon>Rhodophyta</taxon>
        <taxon>Bangiophyceae</taxon>
        <taxon>Cyanidiales</taxon>
        <taxon>Cyanidiaceae</taxon>
        <taxon>Cyanidium</taxon>
    </lineage>
</organism>
<reference key="1">
    <citation type="journal article" date="2000" name="J. Mol. Evol.">
        <title>The structure and gene repertoire of an ancient red algal plastid genome.</title>
        <authorList>
            <person name="Gloeckner G."/>
            <person name="Rosenthal A."/>
            <person name="Valentin K.-U."/>
        </authorList>
    </citation>
    <scope>NUCLEOTIDE SEQUENCE [LARGE SCALE GENOMIC DNA]</scope>
    <source>
        <strain>RK-1</strain>
    </source>
</reference>
<sequence length="1081" mass="121882">MKKNQFANKLIVIDLLSVQRESFYSFLTEGLAKELNNFSPIIDYTGKLELHLVTNQLVIKKPKFSFEEAKRRDCSYTISINIVTQLFNKNSGDVKEQEILLGEIPLMTQKGTFVINGAERVIVNQIVRSPGIYFNSEMDKNNLKTFNFLIIPNRGAWLKCEIDKNDLIWIRIDKNKKINLSIFFKALGIDHDDLRIKNAFRQPEFIYKNLNKDENYTQQEALEELHKKLFPGEPATSEASTKILYFKFFNPKKYDLGIVGRKKINKKLDLNSPENIRILTIQDILSGINYLINLKFGFGNIDDIDHLANRRLKSVGELLQSQISIGLIRLERLIKERMTICEQSSLVPSALINPKPIFAAIKEFFNSSQLSQFMDQVNPLAELTHKRRVSSLGPGGLSKERAGFAVRDIHPSHYGRICPIETPEGPNAGLIGSLAIYARINPDGFIEAPFYKVNQGQVLKNKGIIYLDAEQEDEFKIAPGDIRINETNFIKEINVPVRYRQEFTQCPAEEIDFIAVSPIQVISAATSLIPFLEHNDANRALMGSNMQRQAVPLIFPERPLVGTGLEAQIAKDSGIMAISRSNGIVKFTSAEKIIVTDSSNNQITYNLQKYQKSNQETCINHRPIVWPGERIKKGQILADGSATDTGELALGRDVLVAYMPWEGYNYEDAFLISDRLVYEDLYTSIHIEKYEIEARQTKLGPEEITRNIPNVGENSLKQLDENGIVVVSSFVESGSILVGKVTPKGESDQPPESKLLQAIFGEKNKDVKDTSLRLPNGTRGRVVDVRIFSREKGDELAVGINYIVRIYVAQKRKIQIGDKMAGRHGNKGIISKILPRQDMPYLPNGTPVDIILNPLGVPSRMNVGQIFECILGISAFNLKKRFRILPFDEMYESDSSRILINQKLKEAQTLTNLDYLFNENHLGKVALFDGRSGEKFDNPVLVGKIYMMKLVHLVDDKIHSRSTGPYSLVTQQPLGGKAQQGGQRLGEMEVWAFEAFGAAYALQELLTIKSDDIQGRNEALTAIVRGKTIPKPGTPESLKVLMREIQSLGLDIAAYRLPNLHHGEIKSIEIDLTHNKIVQKR</sequence>